<keyword id="KW-0093">Biotin biosynthesis</keyword>
<keyword id="KW-0963">Cytoplasm</keyword>
<keyword id="KW-0378">Hydrolase</keyword>
<keyword id="KW-0719">Serine esterase</keyword>
<feature type="chain" id="PRO_1000139988" description="Pimeloyl-[acyl-carrier protein] methyl ester esterase">
    <location>
        <begin position="1"/>
        <end position="256"/>
    </location>
</feature>
<feature type="domain" description="AB hydrolase-1" evidence="1">
    <location>
        <begin position="15"/>
        <end position="242"/>
    </location>
</feature>
<feature type="active site" description="Nucleophile" evidence="2">
    <location>
        <position position="82"/>
    </location>
</feature>
<feature type="active site" evidence="2">
    <location>
        <position position="207"/>
    </location>
</feature>
<feature type="active site" evidence="2">
    <location>
        <position position="235"/>
    </location>
</feature>
<feature type="binding site" evidence="2">
    <location>
        <position position="22"/>
    </location>
    <ligand>
        <name>substrate</name>
    </ligand>
</feature>
<feature type="binding site" evidence="2">
    <location>
        <begin position="82"/>
        <end position="83"/>
    </location>
    <ligand>
        <name>substrate</name>
    </ligand>
</feature>
<feature type="binding site" evidence="2">
    <location>
        <begin position="143"/>
        <end position="147"/>
    </location>
    <ligand>
        <name>substrate</name>
    </ligand>
</feature>
<feature type="binding site" evidence="2">
    <location>
        <position position="235"/>
    </location>
    <ligand>
        <name>substrate</name>
    </ligand>
</feature>
<comment type="function">
    <text evidence="2">The physiological role of BioH is to remove the methyl group introduced by BioC when the pimeloyl moiety is complete. It allows to synthesize pimeloyl-ACP via the fatty acid synthetic pathway through the hydrolysis of the ester bonds of pimeloyl-ACP esters.</text>
</comment>
<comment type="catalytic activity">
    <reaction evidence="2">
        <text>6-carboxyhexanoyl-[ACP] methyl ester + H2O = 6-carboxyhexanoyl-[ACP] + methanol + H(+)</text>
        <dbReference type="Rhea" id="RHEA:42700"/>
        <dbReference type="Rhea" id="RHEA-COMP:9955"/>
        <dbReference type="Rhea" id="RHEA-COMP:10186"/>
        <dbReference type="ChEBI" id="CHEBI:15377"/>
        <dbReference type="ChEBI" id="CHEBI:15378"/>
        <dbReference type="ChEBI" id="CHEBI:17790"/>
        <dbReference type="ChEBI" id="CHEBI:78846"/>
        <dbReference type="ChEBI" id="CHEBI:82735"/>
        <dbReference type="EC" id="3.1.1.85"/>
    </reaction>
</comment>
<comment type="pathway">
    <text evidence="2">Cofactor biosynthesis; biotin biosynthesis.</text>
</comment>
<comment type="subunit">
    <text evidence="2">Monomer.</text>
</comment>
<comment type="subcellular location">
    <subcellularLocation>
        <location evidence="2">Cytoplasm</location>
    </subcellularLocation>
</comment>
<comment type="similarity">
    <text evidence="2">Belongs to the AB hydrolase superfamily. Carboxylesterase BioH family.</text>
</comment>
<name>BIOH_ECO7I</name>
<gene>
    <name evidence="2" type="primary">bioH</name>
    <name type="ordered locus">ECIAI39_3892</name>
</gene>
<evidence type="ECO:0000255" key="1"/>
<evidence type="ECO:0000255" key="2">
    <source>
        <dbReference type="HAMAP-Rule" id="MF_01260"/>
    </source>
</evidence>
<dbReference type="EC" id="3.1.1.85" evidence="2"/>
<dbReference type="EMBL" id="CU928164">
    <property type="protein sequence ID" value="CAR20005.1"/>
    <property type="molecule type" value="Genomic_DNA"/>
</dbReference>
<dbReference type="RefSeq" id="WP_001060095.1">
    <property type="nucleotide sequence ID" value="NC_011750.1"/>
</dbReference>
<dbReference type="RefSeq" id="YP_002409786.1">
    <property type="nucleotide sequence ID" value="NC_011750.1"/>
</dbReference>
<dbReference type="SMR" id="B7NMH7"/>
<dbReference type="STRING" id="585057.ECIAI39_3892"/>
<dbReference type="ESTHER" id="ecoli-bioh">
    <property type="family name" value="BioH"/>
</dbReference>
<dbReference type="MEROPS" id="S33.994"/>
<dbReference type="KEGG" id="ect:ECIAI39_3892"/>
<dbReference type="PATRIC" id="fig|585057.6.peg.4030"/>
<dbReference type="HOGENOM" id="CLU_020336_12_2_6"/>
<dbReference type="UniPathway" id="UPA00078"/>
<dbReference type="Proteomes" id="UP000000749">
    <property type="component" value="Chromosome"/>
</dbReference>
<dbReference type="GO" id="GO:0005737">
    <property type="term" value="C:cytoplasm"/>
    <property type="evidence" value="ECO:0007669"/>
    <property type="project" value="UniProtKB-SubCell"/>
</dbReference>
<dbReference type="GO" id="GO:0090499">
    <property type="term" value="F:pimelyl-[acyl-carrier protein] methyl ester esterase activity"/>
    <property type="evidence" value="ECO:0007669"/>
    <property type="project" value="UniProtKB-EC"/>
</dbReference>
<dbReference type="GO" id="GO:0009102">
    <property type="term" value="P:biotin biosynthetic process"/>
    <property type="evidence" value="ECO:0007669"/>
    <property type="project" value="UniProtKB-UniRule"/>
</dbReference>
<dbReference type="FunFam" id="3.40.50.1820:FF:000045">
    <property type="entry name" value="Pimeloyl-[acyl-carrier protein] methyl ester esterase"/>
    <property type="match status" value="1"/>
</dbReference>
<dbReference type="Gene3D" id="3.40.50.1820">
    <property type="entry name" value="alpha/beta hydrolase"/>
    <property type="match status" value="1"/>
</dbReference>
<dbReference type="HAMAP" id="MF_01260">
    <property type="entry name" value="Carboxylester"/>
    <property type="match status" value="1"/>
</dbReference>
<dbReference type="InterPro" id="IPR000073">
    <property type="entry name" value="AB_hydrolase_1"/>
</dbReference>
<dbReference type="InterPro" id="IPR029058">
    <property type="entry name" value="AB_hydrolase_fold"/>
</dbReference>
<dbReference type="InterPro" id="IPR010076">
    <property type="entry name" value="BioH"/>
</dbReference>
<dbReference type="InterPro" id="IPR050228">
    <property type="entry name" value="Carboxylesterase_BioH"/>
</dbReference>
<dbReference type="NCBIfam" id="TIGR01738">
    <property type="entry name" value="bioH"/>
    <property type="match status" value="1"/>
</dbReference>
<dbReference type="NCBIfam" id="NF007674">
    <property type="entry name" value="PRK10349.1"/>
    <property type="match status" value="1"/>
</dbReference>
<dbReference type="PANTHER" id="PTHR43194">
    <property type="entry name" value="HYDROLASE ALPHA/BETA FOLD FAMILY"/>
    <property type="match status" value="1"/>
</dbReference>
<dbReference type="PANTHER" id="PTHR43194:SF5">
    <property type="entry name" value="PIMELOYL-[ACYL-CARRIER PROTEIN] METHYL ESTER ESTERASE"/>
    <property type="match status" value="1"/>
</dbReference>
<dbReference type="Pfam" id="PF00561">
    <property type="entry name" value="Abhydrolase_1"/>
    <property type="match status" value="1"/>
</dbReference>
<dbReference type="SUPFAM" id="SSF53474">
    <property type="entry name" value="alpha/beta-Hydrolases"/>
    <property type="match status" value="1"/>
</dbReference>
<accession>B7NMH7</accession>
<sequence length="256" mass="28648">MNNIWWQTKGQGNVHLVLLHGWGLNAEVWRCIDEELSSHFTLHLVDLPGFGRSRGFGAMSLADMAEAVLRQAPDKAIWLGWSLGGLVASQIALTHPERVQALVTVASSPCFSARDEWPGIKPDVLAGFQQQLSDDFQRTVERFLALQTMGTETARQDARALKKTVLALPMPEVDVLNGGLEILKTVDLRQPLQNVFMPFLRLYGYLDGLVPRKVVPMLDKLWPHSESYIFAKAAHAPFISHPAEFCRMLVALKQRV</sequence>
<reference key="1">
    <citation type="journal article" date="2009" name="PLoS Genet.">
        <title>Organised genome dynamics in the Escherichia coli species results in highly diverse adaptive paths.</title>
        <authorList>
            <person name="Touchon M."/>
            <person name="Hoede C."/>
            <person name="Tenaillon O."/>
            <person name="Barbe V."/>
            <person name="Baeriswyl S."/>
            <person name="Bidet P."/>
            <person name="Bingen E."/>
            <person name="Bonacorsi S."/>
            <person name="Bouchier C."/>
            <person name="Bouvet O."/>
            <person name="Calteau A."/>
            <person name="Chiapello H."/>
            <person name="Clermont O."/>
            <person name="Cruveiller S."/>
            <person name="Danchin A."/>
            <person name="Diard M."/>
            <person name="Dossat C."/>
            <person name="Karoui M.E."/>
            <person name="Frapy E."/>
            <person name="Garry L."/>
            <person name="Ghigo J.M."/>
            <person name="Gilles A.M."/>
            <person name="Johnson J."/>
            <person name="Le Bouguenec C."/>
            <person name="Lescat M."/>
            <person name="Mangenot S."/>
            <person name="Martinez-Jehanne V."/>
            <person name="Matic I."/>
            <person name="Nassif X."/>
            <person name="Oztas S."/>
            <person name="Petit M.A."/>
            <person name="Pichon C."/>
            <person name="Rouy Z."/>
            <person name="Ruf C.S."/>
            <person name="Schneider D."/>
            <person name="Tourret J."/>
            <person name="Vacherie B."/>
            <person name="Vallenet D."/>
            <person name="Medigue C."/>
            <person name="Rocha E.P.C."/>
            <person name="Denamur E."/>
        </authorList>
    </citation>
    <scope>NUCLEOTIDE SEQUENCE [LARGE SCALE GENOMIC DNA]</scope>
    <source>
        <strain>IAI39 / ExPEC</strain>
    </source>
</reference>
<protein>
    <recommendedName>
        <fullName evidence="2">Pimeloyl-[acyl-carrier protein] methyl ester esterase</fullName>
        <ecNumber evidence="2">3.1.1.85</ecNumber>
    </recommendedName>
    <alternativeName>
        <fullName evidence="2">Biotin synthesis protein BioH</fullName>
    </alternativeName>
    <alternativeName>
        <fullName evidence="2">Carboxylesterase BioH</fullName>
    </alternativeName>
</protein>
<proteinExistence type="inferred from homology"/>
<organism>
    <name type="scientific">Escherichia coli O7:K1 (strain IAI39 / ExPEC)</name>
    <dbReference type="NCBI Taxonomy" id="585057"/>
    <lineage>
        <taxon>Bacteria</taxon>
        <taxon>Pseudomonadati</taxon>
        <taxon>Pseudomonadota</taxon>
        <taxon>Gammaproteobacteria</taxon>
        <taxon>Enterobacterales</taxon>
        <taxon>Enterobacteriaceae</taxon>
        <taxon>Escherichia</taxon>
    </lineage>
</organism>